<evidence type="ECO:0000255" key="1">
    <source>
        <dbReference type="HAMAP-Rule" id="MF_04067"/>
    </source>
</evidence>
<sequence length="121" mass="14320">MDSNTVSSFQDILMRMSKMQLGSSSEDLNGMITQFESLKLYRDSLGEAVMRIGDLHSLQSRNGKWREQLSQKFEEIRWLIEEVRHRLKITENSFEQITFMQALQLLLEVEQEIRTFSFQLI</sequence>
<organism>
    <name type="scientific">Influenza A virus (strain A/Chicken/Brescia/1902 H7N7)</name>
    <dbReference type="NCBI Taxonomy" id="36418"/>
    <lineage>
        <taxon>Viruses</taxon>
        <taxon>Riboviria</taxon>
        <taxon>Orthornavirae</taxon>
        <taxon>Negarnaviricota</taxon>
        <taxon>Polyploviricotina</taxon>
        <taxon>Insthoviricetes</taxon>
        <taxon>Articulavirales</taxon>
        <taxon>Orthomyxoviridae</taxon>
        <taxon>Alphainfluenzavirus</taxon>
        <taxon>Alphainfluenzavirus influenzae</taxon>
        <taxon>Influenza A virus</taxon>
    </lineage>
</organism>
<name>NEP_I02A0</name>
<feature type="chain" id="PRO_0000078978" description="Nuclear export protein">
    <location>
        <begin position="1"/>
        <end position="121"/>
    </location>
</feature>
<feature type="short sequence motif" description="Nuclear export signal" evidence="1">
    <location>
        <begin position="12"/>
        <end position="21"/>
    </location>
</feature>
<feature type="short sequence motif" description="Nuclear export signal" evidence="1">
    <location>
        <begin position="85"/>
        <end position="94"/>
    </location>
</feature>
<feature type="sequence conflict" description="In Ref. 1; AAA56811." ref="1">
    <location>
        <position position="10"/>
    </location>
</feature>
<feature type="sequence conflict" description="In Ref. 1; AAA56811." ref="1">
    <original>S</original>
    <variation>T</variation>
    <location>
        <position position="37"/>
    </location>
</feature>
<proteinExistence type="inferred from homology"/>
<protein>
    <recommendedName>
        <fullName evidence="1">Nuclear export protein</fullName>
        <shortName evidence="1">NEP</shortName>
    </recommendedName>
    <alternativeName>
        <fullName evidence="1">Non-structural protein 2</fullName>
        <shortName evidence="1">NS2</shortName>
    </alternativeName>
</protein>
<keyword id="KW-0025">Alternative splicing</keyword>
<keyword id="KW-1048">Host nucleus</keyword>
<keyword id="KW-0945">Host-virus interaction</keyword>
<keyword id="KW-0813">Transport</keyword>
<keyword id="KW-0946">Virion</keyword>
<dbReference type="EMBL" id="L37798">
    <property type="protein sequence ID" value="AAA56811.1"/>
    <property type="molecule type" value="Genomic_RNA"/>
</dbReference>
<dbReference type="EMBL" id="CY015056">
    <property type="protein sequence ID" value="ABI85072.1"/>
    <property type="molecule type" value="Genomic_RNA"/>
</dbReference>
<dbReference type="SMR" id="P36350"/>
<dbReference type="Proteomes" id="UP000160986">
    <property type="component" value="Genome"/>
</dbReference>
<dbReference type="GO" id="GO:0042025">
    <property type="term" value="C:host cell nucleus"/>
    <property type="evidence" value="ECO:0007669"/>
    <property type="project" value="UniProtKB-SubCell"/>
</dbReference>
<dbReference type="GO" id="GO:0044423">
    <property type="term" value="C:virion component"/>
    <property type="evidence" value="ECO:0007669"/>
    <property type="project" value="UniProtKB-UniRule"/>
</dbReference>
<dbReference type="GO" id="GO:0039675">
    <property type="term" value="P:exit of virus from host cell nucleus through nuclear pore"/>
    <property type="evidence" value="ECO:0007669"/>
    <property type="project" value="UniProtKB-UniRule"/>
</dbReference>
<dbReference type="Gene3D" id="1.10.287.230">
    <property type="match status" value="1"/>
</dbReference>
<dbReference type="Gene3D" id="1.10.287.10">
    <property type="entry name" value="S15/NS1, RNA-binding"/>
    <property type="match status" value="1"/>
</dbReference>
<dbReference type="HAMAP" id="MF_04067">
    <property type="entry name" value="INFV_NEP"/>
    <property type="match status" value="1"/>
</dbReference>
<dbReference type="InterPro" id="IPR000968">
    <property type="entry name" value="Flu_NS2"/>
</dbReference>
<dbReference type="Pfam" id="PF00601">
    <property type="entry name" value="Flu_NS2"/>
    <property type="match status" value="1"/>
</dbReference>
<dbReference type="SUPFAM" id="SSF101156">
    <property type="entry name" value="Nonstructural protein ns2, Nep, M1-binding domain"/>
    <property type="match status" value="1"/>
</dbReference>
<accession>P36350</accession>
<accession>Q0A2L1</accession>
<accession>Q76VJ9</accession>
<reference key="1">
    <citation type="journal article" date="1992" name="Arch. Virol.">
        <title>Subtype H7 influenza viruses: comparative antigenic and molecular analysis of the HA-, M-, and NS-genes.</title>
        <authorList>
            <person name="Klimov A."/>
            <person name="Proesch S."/>
            <person name="Schaefer J."/>
            <person name="Bucher D."/>
        </authorList>
    </citation>
    <scope>NUCLEOTIDE SEQUENCE [GENOMIC RNA]</scope>
</reference>
<reference key="2">
    <citation type="journal article" date="2006" name="Science">
        <title>Large-scale sequence analysis of avian influenza isolates.</title>
        <authorList>
            <person name="Obenauer J.C."/>
            <person name="Denson J."/>
            <person name="Mehta P.K."/>
            <person name="Su X."/>
            <person name="Mukatira S."/>
            <person name="Finkelstein D.B."/>
            <person name="Xu X."/>
            <person name="Wang J."/>
            <person name="Ma J."/>
            <person name="Fan Y."/>
            <person name="Rakestraw K.M."/>
            <person name="Webster R.G."/>
            <person name="Hoffmann E."/>
            <person name="Krauss S."/>
            <person name="Zheng J."/>
            <person name="Zhang Z."/>
            <person name="Naeve C.W."/>
        </authorList>
    </citation>
    <scope>NUCLEOTIDE SEQUENCE [GENOMIC RNA]</scope>
</reference>
<comment type="function">
    <text evidence="1">Mediates the nuclear export of encapsidated genomic RNAs (ribonucleoproteins, RNPs). Acts as an adapter between viral RNPs complexes and the nuclear export machinery of the cell. Possesses no intrinsic RNA-binding activity, but includes a C-terminal M1-binding domain. This domain is believed to allow recognition of RNPs bound to the protein M1. Since protein M1 is not available in large quantities before late stages of infection, such an indirect recognition mechanism probably ensures that genomic RNPs are not exported from the host nucleus until sufficient quantities of viral mRNA and progeny genomic RNA have been synthesized. Furthermore, the RNPs enter the host cytoplasm only when associated with the M1 protein that is necessary to guide them to the plasma membrane. May down-regulate viral RNA synthesis when overproduced.</text>
</comment>
<comment type="subunit">
    <text evidence="1">Interacts with protein M1. May interact with host nucleoporin RAB/HRB and exportin XPO1/CRM1.</text>
</comment>
<comment type="subcellular location">
    <subcellularLocation>
        <location evidence="1">Virion</location>
    </subcellularLocation>
    <subcellularLocation>
        <location evidence="1">Host nucleus</location>
    </subcellularLocation>
</comment>
<comment type="alternative products">
    <event type="alternative splicing"/>
    <isoform>
        <id>P36350-1</id>
        <name>NEP</name>
        <name>NS2</name>
        <sequence type="displayed"/>
    </isoform>
    <isoform>
        <id>P36349-1</id>
        <name>NS1</name>
        <sequence type="external"/>
    </isoform>
</comment>
<comment type="miscellaneous">
    <text>Average number present in a viral particle is estimated to be 130-200 molecules.</text>
</comment>
<comment type="similarity">
    <text evidence="1">Belongs to the influenza viruses NEP family.</text>
</comment>
<organismHost>
    <name type="scientific">Aves</name>
    <dbReference type="NCBI Taxonomy" id="8782"/>
</organismHost>
<organismHost>
    <name type="scientific">Equus caballus</name>
    <name type="common">Horse</name>
    <dbReference type="NCBI Taxonomy" id="9796"/>
</organismHost>
<organismHost>
    <name type="scientific">Homo sapiens</name>
    <name type="common">Human</name>
    <dbReference type="NCBI Taxonomy" id="9606"/>
</organismHost>
<organismHost>
    <name type="scientific">Phocidae</name>
    <name type="common">true seals</name>
    <dbReference type="NCBI Taxonomy" id="9709"/>
</organismHost>
<gene>
    <name evidence="1" type="primary">NS</name>
</gene>